<accession>Q8D252</accession>
<dbReference type="EC" id="5.3.1.6" evidence="1"/>
<dbReference type="EMBL" id="BA000021">
    <property type="protein sequence ID" value="BAC24648.1"/>
    <property type="molecule type" value="Genomic_DNA"/>
</dbReference>
<dbReference type="SMR" id="Q8D252"/>
<dbReference type="STRING" id="36870.gene:10369006"/>
<dbReference type="KEGG" id="wbr:rpiA"/>
<dbReference type="eggNOG" id="COG0120">
    <property type="taxonomic scope" value="Bacteria"/>
</dbReference>
<dbReference type="HOGENOM" id="CLU_056590_1_1_6"/>
<dbReference type="OrthoDB" id="5870696at2"/>
<dbReference type="UniPathway" id="UPA00115">
    <property type="reaction ID" value="UER00412"/>
</dbReference>
<dbReference type="Proteomes" id="UP000000562">
    <property type="component" value="Chromosome"/>
</dbReference>
<dbReference type="GO" id="GO:0005829">
    <property type="term" value="C:cytosol"/>
    <property type="evidence" value="ECO:0007669"/>
    <property type="project" value="TreeGrafter"/>
</dbReference>
<dbReference type="GO" id="GO:0004751">
    <property type="term" value="F:ribose-5-phosphate isomerase activity"/>
    <property type="evidence" value="ECO:0007669"/>
    <property type="project" value="UniProtKB-UniRule"/>
</dbReference>
<dbReference type="GO" id="GO:0006014">
    <property type="term" value="P:D-ribose metabolic process"/>
    <property type="evidence" value="ECO:0007669"/>
    <property type="project" value="TreeGrafter"/>
</dbReference>
<dbReference type="GO" id="GO:0009052">
    <property type="term" value="P:pentose-phosphate shunt, non-oxidative branch"/>
    <property type="evidence" value="ECO:0007669"/>
    <property type="project" value="UniProtKB-UniRule"/>
</dbReference>
<dbReference type="CDD" id="cd01398">
    <property type="entry name" value="RPI_A"/>
    <property type="match status" value="1"/>
</dbReference>
<dbReference type="FunFam" id="3.40.50.1360:FF:000001">
    <property type="entry name" value="Ribose-5-phosphate isomerase A"/>
    <property type="match status" value="1"/>
</dbReference>
<dbReference type="Gene3D" id="3.30.70.260">
    <property type="match status" value="1"/>
</dbReference>
<dbReference type="Gene3D" id="3.40.50.1360">
    <property type="match status" value="1"/>
</dbReference>
<dbReference type="HAMAP" id="MF_00170">
    <property type="entry name" value="Rib_5P_isom_A"/>
    <property type="match status" value="1"/>
</dbReference>
<dbReference type="InterPro" id="IPR037171">
    <property type="entry name" value="NagB/RpiA_transferase-like"/>
</dbReference>
<dbReference type="InterPro" id="IPR020672">
    <property type="entry name" value="Ribose5P_isomerase_typA_subgr"/>
</dbReference>
<dbReference type="InterPro" id="IPR004788">
    <property type="entry name" value="Ribose5P_isomerase_type_A"/>
</dbReference>
<dbReference type="NCBIfam" id="NF001924">
    <property type="entry name" value="PRK00702.1"/>
    <property type="match status" value="1"/>
</dbReference>
<dbReference type="NCBIfam" id="TIGR00021">
    <property type="entry name" value="rpiA"/>
    <property type="match status" value="1"/>
</dbReference>
<dbReference type="PANTHER" id="PTHR11934">
    <property type="entry name" value="RIBOSE-5-PHOSPHATE ISOMERASE"/>
    <property type="match status" value="1"/>
</dbReference>
<dbReference type="PANTHER" id="PTHR11934:SF0">
    <property type="entry name" value="RIBOSE-5-PHOSPHATE ISOMERASE"/>
    <property type="match status" value="1"/>
</dbReference>
<dbReference type="Pfam" id="PF06026">
    <property type="entry name" value="Rib_5-P_isom_A"/>
    <property type="match status" value="1"/>
</dbReference>
<dbReference type="SUPFAM" id="SSF75445">
    <property type="entry name" value="D-ribose-5-phosphate isomerase (RpiA), lid domain"/>
    <property type="match status" value="1"/>
</dbReference>
<dbReference type="SUPFAM" id="SSF100950">
    <property type="entry name" value="NagB/RpiA/CoA transferase-like"/>
    <property type="match status" value="1"/>
</dbReference>
<protein>
    <recommendedName>
        <fullName evidence="1">Ribose-5-phosphate isomerase A</fullName>
        <ecNumber evidence="1">5.3.1.6</ecNumber>
    </recommendedName>
    <alternativeName>
        <fullName evidence="1">Phosphoriboisomerase A</fullName>
        <shortName evidence="1">PRI</shortName>
    </alternativeName>
</protein>
<keyword id="KW-0413">Isomerase</keyword>
<keyword id="KW-1185">Reference proteome</keyword>
<reference key="1">
    <citation type="journal article" date="2002" name="Nat. Genet.">
        <title>Genome sequence of the endocellular obligate symbiont of tsetse flies, Wigglesworthia glossinidia.</title>
        <authorList>
            <person name="Akman L."/>
            <person name="Yamashita A."/>
            <person name="Watanabe H."/>
            <person name="Oshima K."/>
            <person name="Shiba T."/>
            <person name="Hattori M."/>
            <person name="Aksoy S."/>
        </authorList>
    </citation>
    <scope>NUCLEOTIDE SEQUENCE [LARGE SCALE GENOMIC DNA]</scope>
</reference>
<feature type="chain" id="PRO_0000158495" description="Ribose-5-phosphate isomerase A">
    <location>
        <begin position="1"/>
        <end position="218"/>
    </location>
</feature>
<feature type="active site" description="Proton acceptor" evidence="1">
    <location>
        <position position="103"/>
    </location>
</feature>
<feature type="binding site" evidence="1">
    <location>
        <begin position="28"/>
        <end position="31"/>
    </location>
    <ligand>
        <name>substrate</name>
    </ligand>
</feature>
<feature type="binding site" evidence="1">
    <location>
        <begin position="81"/>
        <end position="84"/>
    </location>
    <ligand>
        <name>substrate</name>
    </ligand>
</feature>
<feature type="binding site" evidence="1">
    <location>
        <begin position="94"/>
        <end position="97"/>
    </location>
    <ligand>
        <name>substrate</name>
    </ligand>
</feature>
<feature type="binding site" evidence="1">
    <location>
        <position position="121"/>
    </location>
    <ligand>
        <name>substrate</name>
    </ligand>
</feature>
<evidence type="ECO:0000255" key="1">
    <source>
        <dbReference type="HAMAP-Rule" id="MF_00170"/>
    </source>
</evidence>
<organism>
    <name type="scientific">Wigglesworthia glossinidia brevipalpis</name>
    <dbReference type="NCBI Taxonomy" id="36870"/>
    <lineage>
        <taxon>Bacteria</taxon>
        <taxon>Pseudomonadati</taxon>
        <taxon>Pseudomonadota</taxon>
        <taxon>Gammaproteobacteria</taxon>
        <taxon>Enterobacterales</taxon>
        <taxon>Erwiniaceae</taxon>
        <taxon>Wigglesworthia</taxon>
    </lineage>
</organism>
<proteinExistence type="inferred from homology"/>
<gene>
    <name evidence="1" type="primary">rpiA</name>
    <name type="ordered locus">WIGBR5020</name>
</gene>
<sequence>MIEEKLKKQAAWAAIKYIKPGDIVGVGSGSTAEYFIDALGSIKNLIKGTVSSSRISSSKLKDLNIPLFDLNEVSLLNIYVDGADEINQKKHMIKGKGAALTREKIIASAAKKFICIVDSSKFVHVLGRAPLPIEVIPMARTLVSKKIIDIGGSPKYRKGIITENGNVLLDVHNLIILDSLFLEEKINNIPGVVSVGLFAHRAADIAIISGKNGIKIID</sequence>
<name>RPIA_WIGBR</name>
<comment type="function">
    <text evidence="1">Catalyzes the reversible conversion of ribose-5-phosphate to ribulose 5-phosphate.</text>
</comment>
<comment type="catalytic activity">
    <reaction evidence="1">
        <text>aldehydo-D-ribose 5-phosphate = D-ribulose 5-phosphate</text>
        <dbReference type="Rhea" id="RHEA:14657"/>
        <dbReference type="ChEBI" id="CHEBI:58121"/>
        <dbReference type="ChEBI" id="CHEBI:58273"/>
        <dbReference type="EC" id="5.3.1.6"/>
    </reaction>
</comment>
<comment type="pathway">
    <text evidence="1">Carbohydrate degradation; pentose phosphate pathway; D-ribose 5-phosphate from D-ribulose 5-phosphate (non-oxidative stage): step 1/1.</text>
</comment>
<comment type="subunit">
    <text evidence="1">Homodimer.</text>
</comment>
<comment type="similarity">
    <text evidence="1">Belongs to the ribose 5-phosphate isomerase family.</text>
</comment>